<organism>
    <name type="scientific">Buchnera aphidicola subsp. Baizongia pistaciae (strain Bp)</name>
    <dbReference type="NCBI Taxonomy" id="224915"/>
    <lineage>
        <taxon>Bacteria</taxon>
        <taxon>Pseudomonadati</taxon>
        <taxon>Pseudomonadota</taxon>
        <taxon>Gammaproteobacteria</taxon>
        <taxon>Enterobacterales</taxon>
        <taxon>Erwiniaceae</taxon>
        <taxon>Buchnera</taxon>
    </lineage>
</organism>
<evidence type="ECO:0000255" key="1">
    <source>
        <dbReference type="HAMAP-Rule" id="MF_01547"/>
    </source>
</evidence>
<dbReference type="EC" id="2.1.1.166" evidence="1"/>
<dbReference type="EMBL" id="AE016826">
    <property type="protein sequence ID" value="AAO27065.1"/>
    <property type="molecule type" value="Genomic_DNA"/>
</dbReference>
<dbReference type="SMR" id="Q89AF1"/>
<dbReference type="STRING" id="224915.bbp_346"/>
<dbReference type="KEGG" id="bab:bbp_346"/>
<dbReference type="eggNOG" id="COG0293">
    <property type="taxonomic scope" value="Bacteria"/>
</dbReference>
<dbReference type="HOGENOM" id="CLU_009422_4_4_6"/>
<dbReference type="OrthoDB" id="9790080at2"/>
<dbReference type="Proteomes" id="UP000000601">
    <property type="component" value="Chromosome"/>
</dbReference>
<dbReference type="GO" id="GO:0005737">
    <property type="term" value="C:cytoplasm"/>
    <property type="evidence" value="ECO:0007669"/>
    <property type="project" value="UniProtKB-SubCell"/>
</dbReference>
<dbReference type="GO" id="GO:0008650">
    <property type="term" value="F:rRNA (uridine-2'-O-)-methyltransferase activity"/>
    <property type="evidence" value="ECO:0007669"/>
    <property type="project" value="UniProtKB-UniRule"/>
</dbReference>
<dbReference type="FunFam" id="3.40.50.150:FF:000005">
    <property type="entry name" value="Ribosomal RNA large subunit methyltransferase E"/>
    <property type="match status" value="1"/>
</dbReference>
<dbReference type="Gene3D" id="3.40.50.150">
    <property type="entry name" value="Vaccinia Virus protein VP39"/>
    <property type="match status" value="1"/>
</dbReference>
<dbReference type="HAMAP" id="MF_01547">
    <property type="entry name" value="RNA_methyltr_E"/>
    <property type="match status" value="1"/>
</dbReference>
<dbReference type="InterPro" id="IPR050082">
    <property type="entry name" value="RNA_methyltr_RlmE"/>
</dbReference>
<dbReference type="InterPro" id="IPR002877">
    <property type="entry name" value="RNA_MeTrfase_FtsJ_dom"/>
</dbReference>
<dbReference type="InterPro" id="IPR015507">
    <property type="entry name" value="rRNA-MeTfrase_E"/>
</dbReference>
<dbReference type="InterPro" id="IPR029063">
    <property type="entry name" value="SAM-dependent_MTases_sf"/>
</dbReference>
<dbReference type="PANTHER" id="PTHR10920">
    <property type="entry name" value="RIBOSOMAL RNA METHYLTRANSFERASE"/>
    <property type="match status" value="1"/>
</dbReference>
<dbReference type="PANTHER" id="PTHR10920:SF18">
    <property type="entry name" value="RRNA METHYLTRANSFERASE 2, MITOCHONDRIAL"/>
    <property type="match status" value="1"/>
</dbReference>
<dbReference type="Pfam" id="PF01728">
    <property type="entry name" value="FtsJ"/>
    <property type="match status" value="1"/>
</dbReference>
<dbReference type="PIRSF" id="PIRSF005461">
    <property type="entry name" value="23S_rRNA_mtase"/>
    <property type="match status" value="1"/>
</dbReference>
<dbReference type="SUPFAM" id="SSF53335">
    <property type="entry name" value="S-adenosyl-L-methionine-dependent methyltransferases"/>
    <property type="match status" value="1"/>
</dbReference>
<comment type="function">
    <text evidence="1">Specifically methylates the uridine in position 2552 of 23S rRNA at the 2'-O position of the ribose in the fully assembled 50S ribosomal subunit.</text>
</comment>
<comment type="catalytic activity">
    <reaction evidence="1">
        <text>uridine(2552) in 23S rRNA + S-adenosyl-L-methionine = 2'-O-methyluridine(2552) in 23S rRNA + S-adenosyl-L-homocysteine + H(+)</text>
        <dbReference type="Rhea" id="RHEA:42720"/>
        <dbReference type="Rhea" id="RHEA-COMP:10202"/>
        <dbReference type="Rhea" id="RHEA-COMP:10203"/>
        <dbReference type="ChEBI" id="CHEBI:15378"/>
        <dbReference type="ChEBI" id="CHEBI:57856"/>
        <dbReference type="ChEBI" id="CHEBI:59789"/>
        <dbReference type="ChEBI" id="CHEBI:65315"/>
        <dbReference type="ChEBI" id="CHEBI:74478"/>
        <dbReference type="EC" id="2.1.1.166"/>
    </reaction>
</comment>
<comment type="subcellular location">
    <subcellularLocation>
        <location evidence="1">Cytoplasm</location>
    </subcellularLocation>
</comment>
<comment type="similarity">
    <text evidence="1">Belongs to the class I-like SAM-binding methyltransferase superfamily. RNA methyltransferase RlmE family.</text>
</comment>
<gene>
    <name evidence="1" type="primary">rlmE</name>
    <name evidence="1" type="synonym">ftsJ</name>
    <name evidence="1" type="synonym">rrmJ</name>
    <name type="ordered locus">bbp_346</name>
</gene>
<protein>
    <recommendedName>
        <fullName evidence="1">Ribosomal RNA large subunit methyltransferase E</fullName>
        <ecNumber evidence="1">2.1.1.166</ecNumber>
    </recommendedName>
    <alternativeName>
        <fullName evidence="1">23S rRNA Um2552 methyltransferase</fullName>
    </alternativeName>
    <alternativeName>
        <fullName evidence="1">rRNA (uridine-2'-O-)-methyltransferase</fullName>
    </alternativeName>
</protein>
<feature type="chain" id="PRO_0000155482" description="Ribosomal RNA large subunit methyltransferase E">
    <location>
        <begin position="1"/>
        <end position="210"/>
    </location>
</feature>
<feature type="active site" description="Proton acceptor" evidence="1">
    <location>
        <position position="165"/>
    </location>
</feature>
<feature type="binding site" evidence="1">
    <location>
        <position position="64"/>
    </location>
    <ligand>
        <name>S-adenosyl-L-methionine</name>
        <dbReference type="ChEBI" id="CHEBI:59789"/>
    </ligand>
</feature>
<feature type="binding site" evidence="1">
    <location>
        <position position="66"/>
    </location>
    <ligand>
        <name>S-adenosyl-L-methionine</name>
        <dbReference type="ChEBI" id="CHEBI:59789"/>
    </ligand>
</feature>
<feature type="binding site" evidence="1">
    <location>
        <position position="84"/>
    </location>
    <ligand>
        <name>S-adenosyl-L-methionine</name>
        <dbReference type="ChEBI" id="CHEBI:59789"/>
    </ligand>
</feature>
<feature type="binding site" evidence="1">
    <location>
        <position position="100"/>
    </location>
    <ligand>
        <name>S-adenosyl-L-methionine</name>
        <dbReference type="ChEBI" id="CHEBI:59789"/>
    </ligand>
</feature>
<feature type="binding site" evidence="1">
    <location>
        <position position="125"/>
    </location>
    <ligand>
        <name>S-adenosyl-L-methionine</name>
        <dbReference type="ChEBI" id="CHEBI:59789"/>
    </ligand>
</feature>
<accession>Q89AF1</accession>
<reference key="1">
    <citation type="journal article" date="2003" name="Proc. Natl. Acad. Sci. U.S.A.">
        <title>Reductive genome evolution in Buchnera aphidicola.</title>
        <authorList>
            <person name="van Ham R.C.H.J."/>
            <person name="Kamerbeek J."/>
            <person name="Palacios C."/>
            <person name="Rausell C."/>
            <person name="Abascal F."/>
            <person name="Bastolla U."/>
            <person name="Fernandez J.M."/>
            <person name="Jimenez L."/>
            <person name="Postigo M."/>
            <person name="Silva F.J."/>
            <person name="Tamames J."/>
            <person name="Viguera E."/>
            <person name="Latorre A."/>
            <person name="Valencia A."/>
            <person name="Moran F."/>
            <person name="Moya A."/>
        </authorList>
    </citation>
    <scope>NUCLEOTIDE SEQUENCE [LARGE SCALE GENOMIC DNA]</scope>
    <source>
        <strain>Bp</strain>
    </source>
</reference>
<name>RLME_BUCBP</name>
<proteinExistence type="inferred from homology"/>
<sequence length="210" mass="24019">MSKKRSSSSNRWLNEHFKDKYVKQVHKNKSDIRSRAWFKLDDIQSSNNFLKVGMTVVDLGSSPGSWSGYAVKRVGKKGRVIACDMRPMLPIKDVVFFQGNIKNKCFFNFIETYLCHKKVHVIISDMAPNMTGHYFIDHIQAILLSKLALKMSIKVLSKGGSLLVKSFYGQEFNSFIQDVHVTFSKVKICKPNSSRARSREVYILASGRKM</sequence>
<keyword id="KW-0963">Cytoplasm</keyword>
<keyword id="KW-0489">Methyltransferase</keyword>
<keyword id="KW-1185">Reference proteome</keyword>
<keyword id="KW-0698">rRNA processing</keyword>
<keyword id="KW-0949">S-adenosyl-L-methionine</keyword>
<keyword id="KW-0808">Transferase</keyword>